<evidence type="ECO:0000255" key="1"/>
<evidence type="ECO:0000269" key="2">
    <source>
    </source>
</evidence>
<evidence type="ECO:0000269" key="3">
    <source>
    </source>
</evidence>
<evidence type="ECO:0000269" key="4">
    <source>
    </source>
</evidence>
<evidence type="ECO:0000269" key="5">
    <source>
    </source>
</evidence>
<evidence type="ECO:0000303" key="6">
    <source>
    </source>
</evidence>
<evidence type="ECO:0000303" key="7">
    <source>
    </source>
</evidence>
<evidence type="ECO:0000305" key="8"/>
<proteinExistence type="evidence at protein level"/>
<reference key="1">
    <citation type="journal article" date="1998" name="Microbiology">
        <title>The 172 kb prkA-addAB region from 83 degrees to 97 degrees of the Bacillus subtilis chromosome contains several dysfunctional genes, the glyB marker, many genes encoding transporter proteins, and the ubiquitous hit gene.</title>
        <authorList>
            <person name="Noback M.A."/>
            <person name="Holsappel S."/>
            <person name="Kiewiet R."/>
            <person name="Terpstra P."/>
            <person name="Wambutt R."/>
            <person name="Wedler H."/>
            <person name="Venema G."/>
            <person name="Bron S."/>
        </authorList>
    </citation>
    <scope>NUCLEOTIDE SEQUENCE [GENOMIC DNA]</scope>
    <source>
        <strain>168</strain>
    </source>
</reference>
<reference key="2">
    <citation type="journal article" date="1997" name="Nature">
        <title>The complete genome sequence of the Gram-positive bacterium Bacillus subtilis.</title>
        <authorList>
            <person name="Kunst F."/>
            <person name="Ogasawara N."/>
            <person name="Moszer I."/>
            <person name="Albertini A.M."/>
            <person name="Alloni G."/>
            <person name="Azevedo V."/>
            <person name="Bertero M.G."/>
            <person name="Bessieres P."/>
            <person name="Bolotin A."/>
            <person name="Borchert S."/>
            <person name="Borriss R."/>
            <person name="Boursier L."/>
            <person name="Brans A."/>
            <person name="Braun M."/>
            <person name="Brignell S.C."/>
            <person name="Bron S."/>
            <person name="Brouillet S."/>
            <person name="Bruschi C.V."/>
            <person name="Caldwell B."/>
            <person name="Capuano V."/>
            <person name="Carter N.M."/>
            <person name="Choi S.-K."/>
            <person name="Codani J.-J."/>
            <person name="Connerton I.F."/>
            <person name="Cummings N.J."/>
            <person name="Daniel R.A."/>
            <person name="Denizot F."/>
            <person name="Devine K.M."/>
            <person name="Duesterhoeft A."/>
            <person name="Ehrlich S.D."/>
            <person name="Emmerson P.T."/>
            <person name="Entian K.-D."/>
            <person name="Errington J."/>
            <person name="Fabret C."/>
            <person name="Ferrari E."/>
            <person name="Foulger D."/>
            <person name="Fritz C."/>
            <person name="Fujita M."/>
            <person name="Fujita Y."/>
            <person name="Fuma S."/>
            <person name="Galizzi A."/>
            <person name="Galleron N."/>
            <person name="Ghim S.-Y."/>
            <person name="Glaser P."/>
            <person name="Goffeau A."/>
            <person name="Golightly E.J."/>
            <person name="Grandi G."/>
            <person name="Guiseppi G."/>
            <person name="Guy B.J."/>
            <person name="Haga K."/>
            <person name="Haiech J."/>
            <person name="Harwood C.R."/>
            <person name="Henaut A."/>
            <person name="Hilbert H."/>
            <person name="Holsappel S."/>
            <person name="Hosono S."/>
            <person name="Hullo M.-F."/>
            <person name="Itaya M."/>
            <person name="Jones L.-M."/>
            <person name="Joris B."/>
            <person name="Karamata D."/>
            <person name="Kasahara Y."/>
            <person name="Klaerr-Blanchard M."/>
            <person name="Klein C."/>
            <person name="Kobayashi Y."/>
            <person name="Koetter P."/>
            <person name="Koningstein G."/>
            <person name="Krogh S."/>
            <person name="Kumano M."/>
            <person name="Kurita K."/>
            <person name="Lapidus A."/>
            <person name="Lardinois S."/>
            <person name="Lauber J."/>
            <person name="Lazarevic V."/>
            <person name="Lee S.-M."/>
            <person name="Levine A."/>
            <person name="Liu H."/>
            <person name="Masuda S."/>
            <person name="Mauel C."/>
            <person name="Medigue C."/>
            <person name="Medina N."/>
            <person name="Mellado R.P."/>
            <person name="Mizuno M."/>
            <person name="Moestl D."/>
            <person name="Nakai S."/>
            <person name="Noback M."/>
            <person name="Noone D."/>
            <person name="O'Reilly M."/>
            <person name="Ogawa K."/>
            <person name="Ogiwara A."/>
            <person name="Oudega B."/>
            <person name="Park S.-H."/>
            <person name="Parro V."/>
            <person name="Pohl T.M."/>
            <person name="Portetelle D."/>
            <person name="Porwollik S."/>
            <person name="Prescott A.M."/>
            <person name="Presecan E."/>
            <person name="Pujic P."/>
            <person name="Purnelle B."/>
            <person name="Rapoport G."/>
            <person name="Rey M."/>
            <person name="Reynolds S."/>
            <person name="Rieger M."/>
            <person name="Rivolta C."/>
            <person name="Rocha E."/>
            <person name="Roche B."/>
            <person name="Rose M."/>
            <person name="Sadaie Y."/>
            <person name="Sato T."/>
            <person name="Scanlan E."/>
            <person name="Schleich S."/>
            <person name="Schroeter R."/>
            <person name="Scoffone F."/>
            <person name="Sekiguchi J."/>
            <person name="Sekowska A."/>
            <person name="Seror S.J."/>
            <person name="Serror P."/>
            <person name="Shin B.-S."/>
            <person name="Soldo B."/>
            <person name="Sorokin A."/>
            <person name="Tacconi E."/>
            <person name="Takagi T."/>
            <person name="Takahashi H."/>
            <person name="Takemaru K."/>
            <person name="Takeuchi M."/>
            <person name="Tamakoshi A."/>
            <person name="Tanaka T."/>
            <person name="Terpstra P."/>
            <person name="Tognoni A."/>
            <person name="Tosato V."/>
            <person name="Uchiyama S."/>
            <person name="Vandenbol M."/>
            <person name="Vannier F."/>
            <person name="Vassarotti A."/>
            <person name="Viari A."/>
            <person name="Wambutt R."/>
            <person name="Wedler E."/>
            <person name="Wedler H."/>
            <person name="Weitzenegger T."/>
            <person name="Winters P."/>
            <person name="Wipat A."/>
            <person name="Yamamoto H."/>
            <person name="Yamane K."/>
            <person name="Yasumoto K."/>
            <person name="Yata K."/>
            <person name="Yoshida K."/>
            <person name="Yoshikawa H.-F."/>
            <person name="Zumstein E."/>
            <person name="Yoshikawa H."/>
            <person name="Danchin A."/>
        </authorList>
    </citation>
    <scope>NUCLEOTIDE SEQUENCE [LARGE SCALE GENOMIC DNA]</scope>
    <source>
        <strain>168</strain>
    </source>
</reference>
<reference key="3">
    <citation type="journal article" date="2003" name="J. Bacteriol.">
        <title>Additional targets of the Bacillus subtilis global regulator CodY identified by chromatin immunoprecipitation and genome-wide transcript analysis.</title>
        <authorList>
            <person name="Molle V."/>
            <person name="Nakaura Y."/>
            <person name="Shivers R.P."/>
            <person name="Yamaguchi H."/>
            <person name="Losick R."/>
            <person name="Fujita Y."/>
            <person name="Sonenshein A.L."/>
        </authorList>
    </citation>
    <scope>TRANSCRIPTIONAL REGULATION BY CODY</scope>
</reference>
<reference key="4">
    <citation type="journal article" date="2011" name="J. Bacteriol.">
        <title>Contributions of multiple binding sites and effector-independent binding to CodY-mediated regulation in Bacillus subtilis.</title>
        <authorList>
            <person name="Belitsky B.R."/>
            <person name="Sonenshein A.L."/>
        </authorList>
    </citation>
    <scope>TRANSCRIPTIONAL REGULATION BY CODY</scope>
</reference>
<reference key="5">
    <citation type="journal article" date="2015" name="J. Bacteriol.">
        <title>Role of branched-chain amino acid transport in Bacillus subtilis CodY activity.</title>
        <authorList>
            <person name="Belitsky B.R."/>
        </authorList>
    </citation>
    <scope>FUNCTION</scope>
    <scope>ACTIVITY REGULATION</scope>
    <scope>BIOPHYSICOCHEMICAL PROPERTIES</scope>
    <scope>DISRUPTION PHENOTYPE</scope>
    <source>
        <strain>168 / SMY</strain>
    </source>
</reference>
<reference key="6">
    <citation type="journal article" date="2020" name="Environ. Microbiol.">
        <title>Resistance to serine in Bacillus subtilis: identification of the serine transporter YbeC and of a metabolic network that links serine and threonine metabolism.</title>
        <authorList>
            <person name="Klewing A."/>
            <person name="Koo B.M."/>
            <person name="Krueger L."/>
            <person name="Poehlein A."/>
            <person name="Reuss D."/>
            <person name="Daniel R."/>
            <person name="Gross C.A."/>
            <person name="Stuelke J."/>
        </authorList>
    </citation>
    <scope>FUNCTION AS A THREONINE AND SERINE TRANSPORTER</scope>
    <scope>DISRUPTION PHENOTYPE</scope>
</reference>
<comment type="function">
    <text evidence="4 5">Branched-chain amino acid transport system which is involved in the uptake of isoleucine, valine and probably leucine (PubMed:25645558). Can also transport threonine, and is active as a minor serine permease (PubMed:25645558, PubMed:32743959). May be an amino acid permease of rather broad specificity, because several amino acids, albeit at 100-fold excess, are able to prevent isoleucine uptake (PubMed:25645558). Probably does not transport methionine (PubMed:25645558). Together with BraB and BrnQ, plays an important role in the activation of CodY, a branched-chain amino acid-responsive transcriptional regulator that controls the expression of several dozen transcription units in B.subtilis (PubMed:25645558).</text>
</comment>
<comment type="activity regulation">
    <text evidence="4">Isoleucine uptake is efficiently reduced in the presence of 100-fold excess valine, leucine, alanine, threonine, serine, cysteine, asparagine, and a nonproteinaceous amino acid 4-azaleucine.</text>
</comment>
<comment type="biophysicochemical properties">
    <kinetics>
        <KM evidence="4">4.1 uM for isoleucine</KM>
        <Vmax evidence="4">15.0 nmol/min/mg enzyme with isoleucine as substrate</Vmax>
    </kinetics>
</comment>
<comment type="subcellular location">
    <subcellularLocation>
        <location evidence="8">Cell membrane</location>
        <topology evidence="1">Multi-pass membrane protein</topology>
    </subcellularLocation>
</comment>
<comment type="induction">
    <text evidence="2 3">Expression is repressed by the transcriptional regulator CodY (PubMed:12618455, PubMed:21097623). Contains two CodY-binding sites in the bcaP regulatory region, which both contribute to repression in vivo and do so independently of each other (PubMed:21097623). A single CodY-binding site is apparently sufficient for substantial CodY-dependent regulation, but both upstream and downstram CodY-binding regions are required for maximal repression of bcaP (PubMed:21097623). Efficient bcaP repression by CodY requires the simultaneous presence of isoleucine, leucine and valine, and other amino acids in the growth medium (PubMed:21097623).</text>
</comment>
<comment type="disruption phenotype">
    <text evidence="4 5">Mutant is still able to take up isoleucine, leucine and valine (PubMed:25645558). Deletion of the gene confers a weak resistance to growth inhibition by serine (PubMed:32743959). The deletion of the three permease-encoding genes aimA (ybeC), ybxG and bcaP results in an unprecedented resistance to serine up to 100 mM (PubMed:32743959).</text>
</comment>
<comment type="similarity">
    <text evidence="8">Belongs to the amino acid-polyamine-organocation (APC) superfamily.</text>
</comment>
<sequence length="465" mass="49711">MKGSVFRKKSIQDLIAATSGEKSLKRELGAFDLTLLGIGAIIGTGIFVLTGTGAVTAGPGLTISFVVAALACLFAALSYAEFASSVPVSGSVYTFTYATLGELMAFIIGWDLILEYMLAVSAVSVGWSGYFQSFLSGLGIHLPVALTAAPGAVKGTFTLFNLPAFVIVMAITYLLYLGIKESKRVNNIMVILKILVVLLFIAVAAVYVKPHNWQPFMPMGFGGVFSAAALVFFAFIGFDAVSSAAEETKNPAKDLPKGIIFSLLVCTILYVTVSAIMTGVIPFAQFAGVDHPVSLVLQSAGQNWVAGIIDIGAVLGMTTVMLVMLYGQTRVMFAMSRDGLVPGSLSKVHPKHKTPYVATWFFGTMSALLGSLVPLDELAKLVNIGTLSAFVLISVAVIVLRKKQPDLPRAFKCPGVPVIPGLAILFCLFLILNLGWVTIVRFLVWLLIGLVIYFLYSRKHSKLNQ</sequence>
<feature type="chain" id="PRO_0000360836" description="Branched-chain amino acid permease BcaP">
    <location>
        <begin position="1"/>
        <end position="465"/>
    </location>
</feature>
<feature type="transmembrane region" description="Helical" evidence="1">
    <location>
        <begin position="35"/>
        <end position="55"/>
    </location>
</feature>
<feature type="transmembrane region" description="Helical" evidence="1">
    <location>
        <begin position="57"/>
        <end position="77"/>
    </location>
</feature>
<feature type="transmembrane region" description="Helical" evidence="1">
    <location>
        <begin position="103"/>
        <end position="123"/>
    </location>
</feature>
<feature type="transmembrane region" description="Helical" evidence="1">
    <location>
        <begin position="133"/>
        <end position="153"/>
    </location>
</feature>
<feature type="transmembrane region" description="Helical" evidence="1">
    <location>
        <begin position="159"/>
        <end position="179"/>
    </location>
</feature>
<feature type="transmembrane region" description="Helical" evidence="1">
    <location>
        <begin position="188"/>
        <end position="208"/>
    </location>
</feature>
<feature type="transmembrane region" description="Helical" evidence="1">
    <location>
        <begin position="216"/>
        <end position="236"/>
    </location>
</feature>
<feature type="transmembrane region" description="Helical" evidence="1">
    <location>
        <begin position="258"/>
        <end position="278"/>
    </location>
</feature>
<feature type="transmembrane region" description="Helical" evidence="1">
    <location>
        <begin position="305"/>
        <end position="325"/>
    </location>
</feature>
<feature type="transmembrane region" description="Helical" evidence="1">
    <location>
        <begin position="355"/>
        <end position="375"/>
    </location>
</feature>
<feature type="transmembrane region" description="Helical" evidence="1">
    <location>
        <begin position="380"/>
        <end position="400"/>
    </location>
</feature>
<feature type="transmembrane region" description="Helical" evidence="1">
    <location>
        <begin position="413"/>
        <end position="432"/>
    </location>
</feature>
<feature type="transmembrane region" description="Helical" evidence="1">
    <location>
        <begin position="437"/>
        <end position="456"/>
    </location>
</feature>
<name>BCAP_BACSU</name>
<dbReference type="EMBL" id="Y14082">
    <property type="protein sequence ID" value="CAA74491.1"/>
    <property type="molecule type" value="Genomic_DNA"/>
</dbReference>
<dbReference type="EMBL" id="AL009126">
    <property type="protein sequence ID" value="CAB12785.1"/>
    <property type="molecule type" value="Genomic_DNA"/>
</dbReference>
<dbReference type="PIR" id="E69825">
    <property type="entry name" value="E69825"/>
</dbReference>
<dbReference type="RefSeq" id="NP_388827.1">
    <property type="nucleotide sequence ID" value="NC_000964.3"/>
</dbReference>
<dbReference type="RefSeq" id="WP_003245791.1">
    <property type="nucleotide sequence ID" value="NZ_OZ025638.1"/>
</dbReference>
<dbReference type="SMR" id="O07576"/>
<dbReference type="FunCoup" id="O07576">
    <property type="interactions" value="118"/>
</dbReference>
<dbReference type="STRING" id="224308.BSU09460"/>
<dbReference type="PaxDb" id="224308-BSU09460"/>
<dbReference type="EnsemblBacteria" id="CAB12785">
    <property type="protein sequence ID" value="CAB12785"/>
    <property type="gene ID" value="BSU_09460"/>
</dbReference>
<dbReference type="GeneID" id="86874578"/>
<dbReference type="GeneID" id="939746"/>
<dbReference type="KEGG" id="bsu:BSU09460"/>
<dbReference type="PATRIC" id="fig|224308.179.peg.1019"/>
<dbReference type="eggNOG" id="COG0531">
    <property type="taxonomic scope" value="Bacteria"/>
</dbReference>
<dbReference type="InParanoid" id="O07576"/>
<dbReference type="OrthoDB" id="9762947at2"/>
<dbReference type="PhylomeDB" id="O07576"/>
<dbReference type="BioCyc" id="BSUB:BSU09460-MONOMER"/>
<dbReference type="Proteomes" id="UP000001570">
    <property type="component" value="Chromosome"/>
</dbReference>
<dbReference type="GO" id="GO:0005886">
    <property type="term" value="C:plasma membrane"/>
    <property type="evidence" value="ECO:0007669"/>
    <property type="project" value="UniProtKB-SubCell"/>
</dbReference>
<dbReference type="GO" id="GO:0015171">
    <property type="term" value="F:amino acid transmembrane transporter activity"/>
    <property type="evidence" value="ECO:0000318"/>
    <property type="project" value="GO_Central"/>
</dbReference>
<dbReference type="GO" id="GO:0006865">
    <property type="term" value="P:amino acid transport"/>
    <property type="evidence" value="ECO:0000318"/>
    <property type="project" value="GO_Central"/>
</dbReference>
<dbReference type="Gene3D" id="1.20.1740.10">
    <property type="entry name" value="Amino acid/polyamine transporter I"/>
    <property type="match status" value="1"/>
</dbReference>
<dbReference type="InterPro" id="IPR002293">
    <property type="entry name" value="AA/rel_permease1"/>
</dbReference>
<dbReference type="InterPro" id="IPR004758">
    <property type="entry name" value="AA_transporter"/>
</dbReference>
<dbReference type="NCBIfam" id="TIGR00909">
    <property type="entry name" value="2A0306"/>
    <property type="match status" value="1"/>
</dbReference>
<dbReference type="PANTHER" id="PTHR43243:SF4">
    <property type="entry name" value="CATIONIC AMINO ACID TRANSPORTER 4"/>
    <property type="match status" value="1"/>
</dbReference>
<dbReference type="PANTHER" id="PTHR43243">
    <property type="entry name" value="INNER MEMBRANE TRANSPORTER YGJI-RELATED"/>
    <property type="match status" value="1"/>
</dbReference>
<dbReference type="Pfam" id="PF13520">
    <property type="entry name" value="AA_permease_2"/>
    <property type="match status" value="1"/>
</dbReference>
<dbReference type="PIRSF" id="PIRSF006060">
    <property type="entry name" value="AA_transporter"/>
    <property type="match status" value="1"/>
</dbReference>
<organism>
    <name type="scientific">Bacillus subtilis (strain 168)</name>
    <dbReference type="NCBI Taxonomy" id="224308"/>
    <lineage>
        <taxon>Bacteria</taxon>
        <taxon>Bacillati</taxon>
        <taxon>Bacillota</taxon>
        <taxon>Bacilli</taxon>
        <taxon>Bacillales</taxon>
        <taxon>Bacillaceae</taxon>
        <taxon>Bacillus</taxon>
    </lineage>
</organism>
<protein>
    <recommendedName>
        <fullName evidence="8">Branched-chain amino acid permease BcaP</fullName>
        <shortName evidence="7">BCAA permease</shortName>
    </recommendedName>
</protein>
<keyword id="KW-0029">Amino-acid transport</keyword>
<keyword id="KW-1003">Cell membrane</keyword>
<keyword id="KW-0472">Membrane</keyword>
<keyword id="KW-1185">Reference proteome</keyword>
<keyword id="KW-0812">Transmembrane</keyword>
<keyword id="KW-1133">Transmembrane helix</keyword>
<keyword id="KW-0813">Transport</keyword>
<accession>O07576</accession>
<accession>Q796X7</accession>
<gene>
    <name evidence="6" type="primary">bcaP</name>
    <name type="synonym">yhdG</name>
    <name type="ordered locus">BSU09460</name>
</gene>